<organism>
    <name type="scientific">Canis lupus familiaris</name>
    <name type="common">Dog</name>
    <name type="synonym">Canis familiaris</name>
    <dbReference type="NCBI Taxonomy" id="9615"/>
    <lineage>
        <taxon>Eukaryota</taxon>
        <taxon>Metazoa</taxon>
        <taxon>Chordata</taxon>
        <taxon>Craniata</taxon>
        <taxon>Vertebrata</taxon>
        <taxon>Euteleostomi</taxon>
        <taxon>Mammalia</taxon>
        <taxon>Eutheria</taxon>
        <taxon>Laurasiatheria</taxon>
        <taxon>Carnivora</taxon>
        <taxon>Caniformia</taxon>
        <taxon>Canidae</taxon>
        <taxon>Canis</taxon>
    </lineage>
</organism>
<evidence type="ECO:0000250" key="1"/>
<evidence type="ECO:0000250" key="2">
    <source>
        <dbReference type="UniProtKB" id="P41229"/>
    </source>
</evidence>
<evidence type="ECO:0000250" key="3">
    <source>
        <dbReference type="UniProtKB" id="P41230"/>
    </source>
</evidence>
<evidence type="ECO:0000255" key="4">
    <source>
        <dbReference type="PROSITE-ProRule" id="PRU00146"/>
    </source>
</evidence>
<evidence type="ECO:0000255" key="5">
    <source>
        <dbReference type="PROSITE-ProRule" id="PRU00355"/>
    </source>
</evidence>
<evidence type="ECO:0000255" key="6">
    <source>
        <dbReference type="PROSITE-ProRule" id="PRU00537"/>
    </source>
</evidence>
<evidence type="ECO:0000255" key="7">
    <source>
        <dbReference type="PROSITE-ProRule" id="PRU00538"/>
    </source>
</evidence>
<evidence type="ECO:0000256" key="8">
    <source>
        <dbReference type="SAM" id="MobiDB-lite"/>
    </source>
</evidence>
<evidence type="ECO:0000305" key="9"/>
<dbReference type="EC" id="1.14.11.67" evidence="2"/>
<dbReference type="EMBL" id="DQ223016">
    <property type="protein sequence ID" value="ABB04461.1"/>
    <property type="molecule type" value="mRNA"/>
</dbReference>
<dbReference type="RefSeq" id="NP_001041497.1">
    <property type="nucleotide sequence ID" value="NM_001048032.1"/>
</dbReference>
<dbReference type="BMRB" id="Q38JA7"/>
<dbReference type="SMR" id="Q38JA7"/>
<dbReference type="FunCoup" id="Q38JA7">
    <property type="interactions" value="2392"/>
</dbReference>
<dbReference type="STRING" id="9615.ENSCAFP00000023835"/>
<dbReference type="PaxDb" id="9612-ENSCAFP00000023837"/>
<dbReference type="GeneID" id="491894"/>
<dbReference type="KEGG" id="cfa:491894"/>
<dbReference type="CTD" id="8242"/>
<dbReference type="eggNOG" id="KOG1246">
    <property type="taxonomic scope" value="Eukaryota"/>
</dbReference>
<dbReference type="InParanoid" id="Q38JA7"/>
<dbReference type="OrthoDB" id="1678912at2759"/>
<dbReference type="Proteomes" id="UP000002254">
    <property type="component" value="Unplaced"/>
</dbReference>
<dbReference type="Proteomes" id="UP000694429">
    <property type="component" value="Unplaced"/>
</dbReference>
<dbReference type="Proteomes" id="UP000694542">
    <property type="component" value="Unplaced"/>
</dbReference>
<dbReference type="Proteomes" id="UP000805418">
    <property type="component" value="Unplaced"/>
</dbReference>
<dbReference type="GO" id="GO:0000785">
    <property type="term" value="C:chromatin"/>
    <property type="evidence" value="ECO:0000318"/>
    <property type="project" value="GO_Central"/>
</dbReference>
<dbReference type="GO" id="GO:0005634">
    <property type="term" value="C:nucleus"/>
    <property type="evidence" value="ECO:0000318"/>
    <property type="project" value="GO_Central"/>
</dbReference>
<dbReference type="GO" id="GO:0003677">
    <property type="term" value="F:DNA binding"/>
    <property type="evidence" value="ECO:0007669"/>
    <property type="project" value="InterPro"/>
</dbReference>
<dbReference type="GO" id="GO:0034647">
    <property type="term" value="F:histone H3K4me/H3K4me2/H3K4me3 demethylase activity"/>
    <property type="evidence" value="ECO:0000318"/>
    <property type="project" value="GO_Central"/>
</dbReference>
<dbReference type="GO" id="GO:0008270">
    <property type="term" value="F:zinc ion binding"/>
    <property type="evidence" value="ECO:0007669"/>
    <property type="project" value="UniProtKB-KW"/>
</dbReference>
<dbReference type="GO" id="GO:0006338">
    <property type="term" value="P:chromatin remodeling"/>
    <property type="evidence" value="ECO:0000318"/>
    <property type="project" value="GO_Central"/>
</dbReference>
<dbReference type="GO" id="GO:0045892">
    <property type="term" value="P:negative regulation of DNA-templated transcription"/>
    <property type="evidence" value="ECO:0000250"/>
    <property type="project" value="UniProtKB"/>
</dbReference>
<dbReference type="GO" id="GO:0006355">
    <property type="term" value="P:regulation of DNA-templated transcription"/>
    <property type="evidence" value="ECO:0000318"/>
    <property type="project" value="GO_Central"/>
</dbReference>
<dbReference type="GO" id="GO:0048511">
    <property type="term" value="P:rhythmic process"/>
    <property type="evidence" value="ECO:0007669"/>
    <property type="project" value="UniProtKB-KW"/>
</dbReference>
<dbReference type="CDD" id="cd16875">
    <property type="entry name" value="ARID_KDM5C_5D"/>
    <property type="match status" value="1"/>
</dbReference>
<dbReference type="CDD" id="cd15604">
    <property type="entry name" value="PHD1_KDM5C_5D"/>
    <property type="match status" value="1"/>
</dbReference>
<dbReference type="FunFam" id="3.30.40.10:FF:000072">
    <property type="entry name" value="lysine-specific demethylase 5C isoform X2"/>
    <property type="match status" value="1"/>
</dbReference>
<dbReference type="FunFam" id="2.60.120.650:FF:000041">
    <property type="entry name" value="lysine-specific demethylase 5C isoform X6"/>
    <property type="match status" value="1"/>
</dbReference>
<dbReference type="FunFam" id="3.30.40.10:FF:000651">
    <property type="entry name" value="Lysine-specific demethylase 5D"/>
    <property type="match status" value="1"/>
</dbReference>
<dbReference type="FunFam" id="1.10.150.60:FF:000001">
    <property type="entry name" value="Putative lysine-specific demethylase 5b"/>
    <property type="match status" value="1"/>
</dbReference>
<dbReference type="FunFam" id="2.60.120.650:FF:000001">
    <property type="entry name" value="Putative lysine-specific demethylase 5b"/>
    <property type="match status" value="1"/>
</dbReference>
<dbReference type="Gene3D" id="1.10.150.60">
    <property type="entry name" value="ARID DNA-binding domain"/>
    <property type="match status" value="1"/>
</dbReference>
<dbReference type="Gene3D" id="2.60.120.650">
    <property type="entry name" value="Cupin"/>
    <property type="match status" value="1"/>
</dbReference>
<dbReference type="Gene3D" id="3.30.40.10">
    <property type="entry name" value="Zinc/RING finger domain, C3HC4 (zinc finger)"/>
    <property type="match status" value="2"/>
</dbReference>
<dbReference type="InterPro" id="IPR001606">
    <property type="entry name" value="ARID_dom"/>
</dbReference>
<dbReference type="InterPro" id="IPR036431">
    <property type="entry name" value="ARID_dom_sf"/>
</dbReference>
<dbReference type="InterPro" id="IPR003347">
    <property type="entry name" value="JmjC_dom"/>
</dbReference>
<dbReference type="InterPro" id="IPR003349">
    <property type="entry name" value="JmjN"/>
</dbReference>
<dbReference type="InterPro" id="IPR048615">
    <property type="entry name" value="KDM5_C-hel"/>
</dbReference>
<dbReference type="InterPro" id="IPR013637">
    <property type="entry name" value="Lys_sp_deMease-like_dom"/>
</dbReference>
<dbReference type="InterPro" id="IPR019786">
    <property type="entry name" value="Zinc_finger_PHD-type_CS"/>
</dbReference>
<dbReference type="InterPro" id="IPR004198">
    <property type="entry name" value="Znf_C5HC2"/>
</dbReference>
<dbReference type="InterPro" id="IPR011011">
    <property type="entry name" value="Znf_FYVE_PHD"/>
</dbReference>
<dbReference type="InterPro" id="IPR001965">
    <property type="entry name" value="Znf_PHD"/>
</dbReference>
<dbReference type="InterPro" id="IPR019787">
    <property type="entry name" value="Znf_PHD-finger"/>
</dbReference>
<dbReference type="InterPro" id="IPR013083">
    <property type="entry name" value="Znf_RING/FYVE/PHD"/>
</dbReference>
<dbReference type="PANTHER" id="PTHR10694">
    <property type="entry name" value="LYSINE-SPECIFIC DEMETHYLASE"/>
    <property type="match status" value="1"/>
</dbReference>
<dbReference type="PANTHER" id="PTHR10694:SF43">
    <property type="entry name" value="LYSINE-SPECIFIC DEMETHYLASE 5C"/>
    <property type="match status" value="1"/>
</dbReference>
<dbReference type="Pfam" id="PF01388">
    <property type="entry name" value="ARID"/>
    <property type="match status" value="1"/>
</dbReference>
<dbReference type="Pfam" id="PF02373">
    <property type="entry name" value="JmjC"/>
    <property type="match status" value="1"/>
</dbReference>
<dbReference type="Pfam" id="PF02375">
    <property type="entry name" value="JmjN"/>
    <property type="match status" value="1"/>
</dbReference>
<dbReference type="Pfam" id="PF21323">
    <property type="entry name" value="KDM5_C-hel"/>
    <property type="match status" value="1"/>
</dbReference>
<dbReference type="Pfam" id="PF00628">
    <property type="entry name" value="PHD"/>
    <property type="match status" value="1"/>
</dbReference>
<dbReference type="Pfam" id="PF08429">
    <property type="entry name" value="PLU-1"/>
    <property type="match status" value="1"/>
</dbReference>
<dbReference type="Pfam" id="PF02928">
    <property type="entry name" value="zf-C5HC2"/>
    <property type="match status" value="1"/>
</dbReference>
<dbReference type="SMART" id="SM01014">
    <property type="entry name" value="ARID"/>
    <property type="match status" value="1"/>
</dbReference>
<dbReference type="SMART" id="SM00501">
    <property type="entry name" value="BRIGHT"/>
    <property type="match status" value="1"/>
</dbReference>
<dbReference type="SMART" id="SM00558">
    <property type="entry name" value="JmjC"/>
    <property type="match status" value="1"/>
</dbReference>
<dbReference type="SMART" id="SM00545">
    <property type="entry name" value="JmjN"/>
    <property type="match status" value="1"/>
</dbReference>
<dbReference type="SMART" id="SM00249">
    <property type="entry name" value="PHD"/>
    <property type="match status" value="2"/>
</dbReference>
<dbReference type="SUPFAM" id="SSF46774">
    <property type="entry name" value="ARID-like"/>
    <property type="match status" value="1"/>
</dbReference>
<dbReference type="SUPFAM" id="SSF51197">
    <property type="entry name" value="Clavaminate synthase-like"/>
    <property type="match status" value="1"/>
</dbReference>
<dbReference type="SUPFAM" id="SSF57903">
    <property type="entry name" value="FYVE/PHD zinc finger"/>
    <property type="match status" value="2"/>
</dbReference>
<dbReference type="PROSITE" id="PS51011">
    <property type="entry name" value="ARID"/>
    <property type="match status" value="1"/>
</dbReference>
<dbReference type="PROSITE" id="PS51184">
    <property type="entry name" value="JMJC"/>
    <property type="match status" value="1"/>
</dbReference>
<dbReference type="PROSITE" id="PS51183">
    <property type="entry name" value="JMJN"/>
    <property type="match status" value="1"/>
</dbReference>
<dbReference type="PROSITE" id="PS01359">
    <property type="entry name" value="ZF_PHD_1"/>
    <property type="match status" value="2"/>
</dbReference>
<dbReference type="PROSITE" id="PS50016">
    <property type="entry name" value="ZF_PHD_2"/>
    <property type="match status" value="1"/>
</dbReference>
<sequence>MEPGSDDFLPPPECPVFEPSWAEFRDPLGYIAKIRPIAEKSGICKIRPPADWQPPFAVEVDNFRFTPRIQRLNELEAQTRVKLNYLDQIAKFWEIQGSSLKIPNVERRILDLYSLSKIVVEEGGYEAICKDRRWARVAQRLNYPPGKNIGSLLRSHYERIVYPYEMYQSGANLVQCNTRPFDNEEKDKEYKPHSIPLRQSVQPSKFNSYGRRAKRLQPDPEPTEEDIEKNPELKKLQIYGAGPKMMGLGLMAKDKTLRKKDKEGPECPPTVVVKEESGGDVKVESTSPKTFLESKEELSHSPEPCTKMTMRLRRNHSNAQFIESYVCRMCSRGDEDDKLLLCDGCDDNYHIFCLLPPLPEIPKGVWRCPKCVMAECKRPPEAFGFEQATREYTLQSFGEMADSFKADYFNMPVHMVPTELVEKEFWRLVNSIEEDVTVEYGADIHSKEFGSGFPVSDNKRHLTPEEEEYATSGWNLNVMPVLEQSVLCHINADISGMKVPWLYVGMVFSAFCWHIEDHWSYSINYLHWGEPKTWYGVPSLAAEHLEEVMKKLTPELFDSQPDLLHQLVTLMNPNTLMSHGVPVVRTNQCAGEFVITFPRAYHSGFNQGYNFAEAVNFCTADWLPAGRQCIEHYRRLRRYCVFSHEELICKMAACPEKLDLNLAAAVHKEMFIMVQEERRLRKALLEKGITEAEREAFELLPDDERQCIKCKTTCFLSALACYDCPDGLVCLSHINDLCKCSSSRQYLRYRYTLDELPAMLHKLKVRAESFDTWANKVRVALEVEDGRKRSLEELRALESEARERRFPNSELLQRLKNCLSEAEACVSRALGLVSGQEAGPHRVAGLQMTLAELRAFLDQMNNLPCAMHQIGDVKGILEQVEGYQAEAREALASLPSSPGLLQSLLERGQQLGVEVPEAQQLQRQVEQARWLDEVKRTLAPAARRGTLAVMRGLLVAGASVAPSPAVDKARAELQELLTIAERWEEKAHLCLEARQKHPPATLEAIIHEAENIPVHLPNIQALKEALAKARAWIADVDEIQNGDHYPCLDDLEGLVAVGRDLPVGLEELRQLELQVLTAHSWREKASKTFLKKNSCYTLLEVLCPCADAGSDSIKRSRWMEKELGLYKSDTELLGLSAQDLRDPGSVIVAFKEGEQKEKEGILQLRRTNSAKPSPLASSATASSATSVCVCGQVPAGVGALQCDLCQDWFHGRCVSVPRLLSSPRPSPTSSPLLAWWEWDTKFLCPLCMRSRRPRLETILALLVALQRLPVRLPEGEALQCLTERAISWQGRARQALASEDVTALLGRLAELRQRLQAEPRPEEPPTYPPAPASDPLREGSGKDMPKVQGLLENGDSVTSPEKVALGEGSDLELLSSLLPQLTGPALELPEATRAPLEELMLEGDLLEVTLDENHSIWQLLQAGQPPDMERIRTLLELEKAERHGSRARGRALERRRRRKVDRGGEGDDPAREELEPKRVRSSGPEAEEAQEEEELEEETGGEGPPQTLPTTGSPSTQENQNGLEPALATSGPSAPFSTLSPQLHVPCPQQPPQQQL</sequence>
<accession>Q38JA7</accession>
<feature type="chain" id="PRO_0000292416" description="Lysine-specific demethylase 5C">
    <location>
        <begin position="1"/>
        <end position="1556"/>
    </location>
</feature>
<feature type="domain" description="JmjN" evidence="6">
    <location>
        <begin position="14"/>
        <end position="55"/>
    </location>
</feature>
<feature type="domain" description="ARID" evidence="5">
    <location>
        <begin position="79"/>
        <end position="169"/>
    </location>
</feature>
<feature type="domain" description="JmjC" evidence="7">
    <location>
        <begin position="468"/>
        <end position="634"/>
    </location>
</feature>
<feature type="zinc finger region" description="PHD-type 1" evidence="4">
    <location>
        <begin position="324"/>
        <end position="374"/>
    </location>
</feature>
<feature type="zinc finger region" description="PHD-type 2" evidence="4">
    <location>
        <begin position="1185"/>
        <end position="1250"/>
    </location>
</feature>
<feature type="region of interest" description="Disordered" evidence="8">
    <location>
        <begin position="197"/>
        <end position="227"/>
    </location>
</feature>
<feature type="region of interest" description="Disordered" evidence="8">
    <location>
        <begin position="257"/>
        <end position="303"/>
    </location>
</feature>
<feature type="region of interest" description="Disordered" evidence="8">
    <location>
        <begin position="1315"/>
        <end position="1362"/>
    </location>
</feature>
<feature type="region of interest" description="Disordered" evidence="8">
    <location>
        <begin position="1441"/>
        <end position="1556"/>
    </location>
</feature>
<feature type="compositionally biased region" description="Polar residues" evidence="8">
    <location>
        <begin position="197"/>
        <end position="207"/>
    </location>
</feature>
<feature type="compositionally biased region" description="Basic and acidic residues" evidence="8">
    <location>
        <begin position="273"/>
        <end position="283"/>
    </location>
</feature>
<feature type="compositionally biased region" description="Basic and acidic residues" evidence="8">
    <location>
        <begin position="1335"/>
        <end position="1345"/>
    </location>
</feature>
<feature type="compositionally biased region" description="Basic residues" evidence="8">
    <location>
        <begin position="1445"/>
        <end position="1460"/>
    </location>
</feature>
<feature type="compositionally biased region" description="Basic and acidic residues" evidence="8">
    <location>
        <begin position="1461"/>
        <end position="1478"/>
    </location>
</feature>
<feature type="compositionally biased region" description="Acidic residues" evidence="8">
    <location>
        <begin position="1485"/>
        <end position="1500"/>
    </location>
</feature>
<feature type="compositionally biased region" description="Polar residues" evidence="8">
    <location>
        <begin position="1513"/>
        <end position="1522"/>
    </location>
</feature>
<feature type="compositionally biased region" description="Polar residues" evidence="8">
    <location>
        <begin position="1530"/>
        <end position="1540"/>
    </location>
</feature>
<feature type="compositionally biased region" description="Low complexity" evidence="8">
    <location>
        <begin position="1541"/>
        <end position="1556"/>
    </location>
</feature>
<feature type="binding site" evidence="7">
    <location>
        <position position="514"/>
    </location>
    <ligand>
        <name>Fe cation</name>
        <dbReference type="ChEBI" id="CHEBI:24875"/>
        <note>catalytic</note>
    </ligand>
</feature>
<feature type="binding site" evidence="7">
    <location>
        <position position="517"/>
    </location>
    <ligand>
        <name>Fe cation</name>
        <dbReference type="ChEBI" id="CHEBI:24875"/>
        <note>catalytic</note>
    </ligand>
</feature>
<feature type="binding site" evidence="7">
    <location>
        <position position="602"/>
    </location>
    <ligand>
        <name>Fe cation</name>
        <dbReference type="ChEBI" id="CHEBI:24875"/>
        <note>catalytic</note>
    </ligand>
</feature>
<feature type="modified residue" description="Phosphoserine" evidence="2">
    <location>
        <position position="287"/>
    </location>
</feature>
<feature type="modified residue" description="Phosphoserine" evidence="2">
    <location>
        <position position="301"/>
    </location>
</feature>
<feature type="modified residue" description="Phosphoserine" evidence="2">
    <location>
        <position position="317"/>
    </location>
</feature>
<feature type="modified residue" description="Phosphoserine" evidence="3">
    <location>
        <position position="893"/>
    </location>
</feature>
<feature type="modified residue" description="Phosphoserine" evidence="2">
    <location>
        <position position="897"/>
    </location>
</feature>
<feature type="modified residue" description="Phosphoserine" evidence="2">
    <location>
        <position position="1359"/>
    </location>
</feature>
<feature type="cross-link" description="Glycyl lysine isopeptide (Lys-Gly) (interchain with G-Cter in SUMO2)" evidence="2">
    <location>
        <position position="205"/>
    </location>
</feature>
<feature type="cross-link" description="Glycyl lysine isopeptide (Lys-Gly) (interchain with G-Cter in SUMO2)" evidence="2">
    <location>
        <position position="229"/>
    </location>
</feature>
<feature type="cross-link" description="Glycyl lysine isopeptide (Lys-Gly) (interchain with G-Cter in SUMO2)" evidence="2">
    <location>
        <position position="244"/>
    </location>
</feature>
<feature type="cross-link" description="Glycyl lysine isopeptide (Lys-Gly) (interchain with G-Cter in SUMO2)" evidence="2">
    <location>
        <position position="274"/>
    </location>
</feature>
<feature type="cross-link" description="Glycyl lysine isopeptide (Lys-Gly) (interchain with G-Cter in SUMO2)" evidence="2">
    <location>
        <position position="295"/>
    </location>
</feature>
<feature type="cross-link" description="Glycyl lysine isopeptide (Lys-Gly) (interchain with G-Cter in SUMO2)" evidence="2">
    <location>
        <position position="1127"/>
    </location>
</feature>
<comment type="function">
    <text evidence="2 3">Histone demethylase that specifically demethylates 'Lys-4' of histone H3, thereby playing a central role in histone code. Does not demethylate histone H3 'Lys-9', H3 'Lys-27', H3 'Lys-36', H3 'Lys-79' or H4 'Lys-20'. Demethylates trimethylated and dimethylated but not monomethylated H3 'Lys-4'. Participates in transcriptional repression of neuronal genes by recruiting histone deacetylases and REST at neuron-restrictive silencer elements. Represses the CLOCK-BMAL1 heterodimer-mediated transcriptional activation of the core clock component PER2.</text>
</comment>
<comment type="catalytic activity">
    <reaction evidence="2">
        <text>N(6),N(6),N(6)-trimethyl-L-lysyl(4)-[histone H3] + 3 2-oxoglutarate + 3 O2 = L-lysyl(4)-[histone H3] + 3 formaldehyde + 3 succinate + 3 CO2</text>
        <dbReference type="Rhea" id="RHEA:60208"/>
        <dbReference type="Rhea" id="RHEA-COMP:15537"/>
        <dbReference type="Rhea" id="RHEA-COMP:15547"/>
        <dbReference type="ChEBI" id="CHEBI:15379"/>
        <dbReference type="ChEBI" id="CHEBI:16526"/>
        <dbReference type="ChEBI" id="CHEBI:16810"/>
        <dbReference type="ChEBI" id="CHEBI:16842"/>
        <dbReference type="ChEBI" id="CHEBI:29969"/>
        <dbReference type="ChEBI" id="CHEBI:30031"/>
        <dbReference type="ChEBI" id="CHEBI:61961"/>
        <dbReference type="EC" id="1.14.11.67"/>
    </reaction>
</comment>
<comment type="cofactor">
    <cofactor evidence="2">
        <name>Fe(2+)</name>
        <dbReference type="ChEBI" id="CHEBI:29033"/>
    </cofactor>
    <text evidence="2">Binds 1 Fe(2+) ion per subunit.</text>
</comment>
<comment type="subunit">
    <text evidence="2">Part of two distinct complexes, one containing E2F6, and the other containing REST. Interacts with ZMYND8.</text>
</comment>
<comment type="subcellular location">
    <subcellularLocation>
        <location evidence="5 6">Nucleus</location>
    </subcellularLocation>
</comment>
<comment type="domain">
    <text evidence="1">The first PHD-type zinc finger domain recognizes and binds H3-K9Me3.</text>
</comment>
<comment type="domain">
    <text evidence="1">Both the JmjC domain and the JmjN domain are required for enzymatic activity.</text>
</comment>
<comment type="similarity">
    <text evidence="9">Belongs to the JARID1 histone demethylase family.</text>
</comment>
<keyword id="KW-0090">Biological rhythms</keyword>
<keyword id="KW-0156">Chromatin regulator</keyword>
<keyword id="KW-0223">Dioxygenase</keyword>
<keyword id="KW-0408">Iron</keyword>
<keyword id="KW-1017">Isopeptide bond</keyword>
<keyword id="KW-0479">Metal-binding</keyword>
<keyword id="KW-0539">Nucleus</keyword>
<keyword id="KW-0560">Oxidoreductase</keyword>
<keyword id="KW-0597">Phosphoprotein</keyword>
<keyword id="KW-1185">Reference proteome</keyword>
<keyword id="KW-0677">Repeat</keyword>
<keyword id="KW-0678">Repressor</keyword>
<keyword id="KW-0804">Transcription</keyword>
<keyword id="KW-0805">Transcription regulation</keyword>
<keyword id="KW-0832">Ubl conjugation</keyword>
<keyword id="KW-0862">Zinc</keyword>
<keyword id="KW-0863">Zinc-finger</keyword>
<proteinExistence type="evidence at transcript level"/>
<protein>
    <recommendedName>
        <fullName>Lysine-specific demethylase 5C</fullName>
        <ecNumber evidence="2">1.14.11.67</ecNumber>
    </recommendedName>
    <alternativeName>
        <fullName>Histone demethylase JARID1C</fullName>
    </alternativeName>
    <alternativeName>
        <fullName>Jumonji/ARID domain-containing protein 1C</fullName>
    </alternativeName>
    <alternativeName>
        <fullName>Protein SmcX</fullName>
    </alternativeName>
    <alternativeName>
        <fullName evidence="9">[histone H3]-trimethyl-L-lysine(4) demethylase 5C</fullName>
    </alternativeName>
</protein>
<name>KDM5C_CANLF</name>
<reference key="1">
    <citation type="submission" date="2005-09" db="EMBL/GenBank/DDBJ databases">
        <title>Canis familiaris JARID1C(SMCX) complete cDNA sequence.</title>
        <authorList>
            <person name="Venkataraman G.M."/>
            <person name="Graves S.S."/>
            <person name="Shin S.S."/>
            <person name="Storb R."/>
        </authorList>
    </citation>
    <scope>NUCLEOTIDE SEQUENCE [MRNA]</scope>
</reference>
<gene>
    <name type="primary">KDM5C</name>
    <name type="synonym">JARID1C</name>
    <name type="synonym">SMCX</name>
</gene>